<name>LY96_HUMAN</name>
<dbReference type="EMBL" id="AB018549">
    <property type="protein sequence ID" value="BAA78717.1"/>
    <property type="molecule type" value="mRNA"/>
</dbReference>
<dbReference type="EMBL" id="AF168121">
    <property type="protein sequence ID" value="AAF89635.1"/>
    <property type="molecule type" value="mRNA"/>
</dbReference>
<dbReference type="EMBL" id="AB446498">
    <property type="protein sequence ID" value="BAG55275.1"/>
    <property type="molecule type" value="mRNA"/>
</dbReference>
<dbReference type="EMBL" id="AC022868">
    <property type="status" value="NOT_ANNOTATED_CDS"/>
    <property type="molecule type" value="Genomic_DNA"/>
</dbReference>
<dbReference type="EMBL" id="AC087672">
    <property type="status" value="NOT_ANNOTATED_CDS"/>
    <property type="molecule type" value="Genomic_DNA"/>
</dbReference>
<dbReference type="EMBL" id="BC020690">
    <property type="protein sequence ID" value="AAH20690.1"/>
    <property type="molecule type" value="mRNA"/>
</dbReference>
<dbReference type="CCDS" id="CCDS56540.1">
    <molecule id="Q9Y6Y9-2"/>
</dbReference>
<dbReference type="CCDS" id="CCDS6216.1">
    <molecule id="Q9Y6Y9-1"/>
</dbReference>
<dbReference type="RefSeq" id="NP_001182726.1">
    <molecule id="Q9Y6Y9-2"/>
    <property type="nucleotide sequence ID" value="NM_001195797.2"/>
</dbReference>
<dbReference type="RefSeq" id="NP_056179.4">
    <molecule id="Q9Y6Y9-1"/>
    <property type="nucleotide sequence ID" value="NM_015364.5"/>
</dbReference>
<dbReference type="PDB" id="2E56">
    <property type="method" value="X-ray"/>
    <property type="resolution" value="2.00 A"/>
    <property type="chains" value="A=17-160"/>
</dbReference>
<dbReference type="PDB" id="2E59">
    <property type="method" value="X-ray"/>
    <property type="resolution" value="2.21 A"/>
    <property type="chains" value="A=17-160"/>
</dbReference>
<dbReference type="PDB" id="2Z65">
    <property type="method" value="X-ray"/>
    <property type="resolution" value="2.70 A"/>
    <property type="chains" value="C/D=19-158"/>
</dbReference>
<dbReference type="PDB" id="3FXI">
    <property type="method" value="X-ray"/>
    <property type="resolution" value="3.10 A"/>
    <property type="chains" value="C/D=19-160"/>
</dbReference>
<dbReference type="PDB" id="3ULA">
    <property type="method" value="X-ray"/>
    <property type="resolution" value="3.60 A"/>
    <property type="chains" value="B/D=19-158"/>
</dbReference>
<dbReference type="PDB" id="4G8A">
    <property type="method" value="X-ray"/>
    <property type="resolution" value="2.40 A"/>
    <property type="chains" value="C/D=17-160"/>
</dbReference>
<dbReference type="PDB" id="8WO1">
    <property type="method" value="EM"/>
    <property type="resolution" value="2.24 A"/>
    <property type="chains" value="C/D=19-160"/>
</dbReference>
<dbReference type="PDB" id="8WTA">
    <property type="method" value="EM"/>
    <property type="resolution" value="2.90 A"/>
    <property type="chains" value="C/D=19-160"/>
</dbReference>
<dbReference type="PDBsum" id="2E56"/>
<dbReference type="PDBsum" id="2E59"/>
<dbReference type="PDBsum" id="2Z65"/>
<dbReference type="PDBsum" id="3FXI"/>
<dbReference type="PDBsum" id="3ULA"/>
<dbReference type="PDBsum" id="4G8A"/>
<dbReference type="PDBsum" id="8WO1"/>
<dbReference type="PDBsum" id="8WTA"/>
<dbReference type="SMR" id="Q9Y6Y9"/>
<dbReference type="BioGRID" id="117170">
    <property type="interactions" value="8"/>
</dbReference>
<dbReference type="ComplexPortal" id="CPX-2545">
    <property type="entry name" value="LY96-TLR4 toll-like receptor complex"/>
</dbReference>
<dbReference type="CORUM" id="Q9Y6Y9"/>
<dbReference type="DIP" id="DIP-38571N"/>
<dbReference type="FunCoup" id="Q9Y6Y9">
    <property type="interactions" value="193"/>
</dbReference>
<dbReference type="IntAct" id="Q9Y6Y9">
    <property type="interactions" value="8"/>
</dbReference>
<dbReference type="STRING" id="9606.ENSP00000284818"/>
<dbReference type="BindingDB" id="Q9Y6Y9"/>
<dbReference type="ChEMBL" id="CHEMBL2375202"/>
<dbReference type="DrugBank" id="DB02767">
    <property type="generic name" value="(R)-3-hydroxytetradecanoic acid"/>
</dbReference>
<dbReference type="DrugBank" id="DB03017">
    <property type="generic name" value="Lauric acid"/>
</dbReference>
<dbReference type="DrugBank" id="DB00295">
    <property type="generic name" value="Morphine"/>
</dbReference>
<dbReference type="DrugBank" id="DB08231">
    <property type="generic name" value="Myristic acid"/>
</dbReference>
<dbReference type="GuidetoPHARMACOLOGY" id="2890"/>
<dbReference type="GlyCosmos" id="Q9Y6Y9">
    <property type="glycosylation" value="2 sites, No reported glycans"/>
</dbReference>
<dbReference type="GlyGen" id="Q9Y6Y9">
    <property type="glycosylation" value="9 sites"/>
</dbReference>
<dbReference type="iPTMnet" id="Q9Y6Y9"/>
<dbReference type="PhosphoSitePlus" id="Q9Y6Y9"/>
<dbReference type="BioMuta" id="LY96"/>
<dbReference type="DMDM" id="296434574"/>
<dbReference type="MassIVE" id="Q9Y6Y9"/>
<dbReference type="PaxDb" id="9606-ENSP00000284818"/>
<dbReference type="PeptideAtlas" id="Q9Y6Y9"/>
<dbReference type="ProteomicsDB" id="16624"/>
<dbReference type="ProteomicsDB" id="86830">
    <molecule id="Q9Y6Y9-1"/>
</dbReference>
<dbReference type="Antibodypedia" id="12334">
    <property type="antibodies" value="481 antibodies from 37 providers"/>
</dbReference>
<dbReference type="DNASU" id="23643"/>
<dbReference type="Ensembl" id="ENST00000284818.7">
    <molecule id="Q9Y6Y9-1"/>
    <property type="protein sequence ID" value="ENSP00000284818.2"/>
    <property type="gene ID" value="ENSG00000154589.7"/>
</dbReference>
<dbReference type="Ensembl" id="ENST00000518893.1">
    <molecule id="Q9Y6Y9-2"/>
    <property type="protein sequence ID" value="ENSP00000430533.1"/>
    <property type="gene ID" value="ENSG00000154589.7"/>
</dbReference>
<dbReference type="GeneID" id="23643"/>
<dbReference type="KEGG" id="hsa:23643"/>
<dbReference type="MANE-Select" id="ENST00000284818.7">
    <property type="protein sequence ID" value="ENSP00000284818.2"/>
    <property type="RefSeq nucleotide sequence ID" value="NM_015364.5"/>
    <property type="RefSeq protein sequence ID" value="NP_056179.4"/>
</dbReference>
<dbReference type="UCSC" id="uc003yad.4">
    <molecule id="Q9Y6Y9-1"/>
    <property type="organism name" value="human"/>
</dbReference>
<dbReference type="AGR" id="HGNC:17156"/>
<dbReference type="CTD" id="23643"/>
<dbReference type="DisGeNET" id="23643"/>
<dbReference type="GeneCards" id="LY96"/>
<dbReference type="HGNC" id="HGNC:17156">
    <property type="gene designation" value="LY96"/>
</dbReference>
<dbReference type="HPA" id="ENSG00000154589">
    <property type="expression patterns" value="Low tissue specificity"/>
</dbReference>
<dbReference type="MIM" id="605243">
    <property type="type" value="gene"/>
</dbReference>
<dbReference type="neXtProt" id="NX_Q9Y6Y9"/>
<dbReference type="OpenTargets" id="ENSG00000154589"/>
<dbReference type="PharmGKB" id="PA134924906"/>
<dbReference type="VEuPathDB" id="HostDB:ENSG00000154589"/>
<dbReference type="eggNOG" id="ENOG502SD7W">
    <property type="taxonomic scope" value="Eukaryota"/>
</dbReference>
<dbReference type="GeneTree" id="ENSGT00390000000742"/>
<dbReference type="HOGENOM" id="CLU_141711_0_0_1"/>
<dbReference type="InParanoid" id="Q9Y6Y9"/>
<dbReference type="OMA" id="HWKEVLC"/>
<dbReference type="OrthoDB" id="9907947at2759"/>
<dbReference type="PAN-GO" id="Q9Y6Y9">
    <property type="GO annotations" value="6 GO annotations based on evolutionary models"/>
</dbReference>
<dbReference type="PhylomeDB" id="Q9Y6Y9"/>
<dbReference type="TreeFam" id="TF335876"/>
<dbReference type="PathwayCommons" id="Q9Y6Y9"/>
<dbReference type="Reactome" id="R-HSA-1236974">
    <property type="pathway name" value="ER-Phagosome pathway"/>
</dbReference>
<dbReference type="Reactome" id="R-HSA-140534">
    <property type="pathway name" value="Caspase activation via Death Receptors in the presence of ligand"/>
</dbReference>
<dbReference type="Reactome" id="R-HSA-166016">
    <property type="pathway name" value="Toll Like Receptor 4 (TLR4) Cascade"/>
</dbReference>
<dbReference type="Reactome" id="R-HSA-166058">
    <property type="pathway name" value="MyD88:MAL(TIRAP) cascade initiated on plasma membrane"/>
</dbReference>
<dbReference type="Reactome" id="R-HSA-166166">
    <property type="pathway name" value="MyD88-independent TLR4 cascade"/>
</dbReference>
<dbReference type="Reactome" id="R-HSA-2562578">
    <property type="pathway name" value="TRIF-mediated programmed cell death"/>
</dbReference>
<dbReference type="Reactome" id="R-HSA-5602498">
    <property type="pathway name" value="MyD88 deficiency (TLR2/4)"/>
</dbReference>
<dbReference type="Reactome" id="R-HSA-5603041">
    <property type="pathway name" value="IRAK4 deficiency (TLR2/4)"/>
</dbReference>
<dbReference type="Reactome" id="R-HSA-5686938">
    <property type="pathway name" value="Regulation of TLR by endogenous ligand"/>
</dbReference>
<dbReference type="Reactome" id="R-HSA-936964">
    <property type="pathway name" value="Activation of IRF3, IRF7 mediated by TBK1, IKKEpsilon (IKBKE)"/>
</dbReference>
<dbReference type="Reactome" id="R-HSA-937041">
    <property type="pathway name" value="IKK complex recruitment mediated by RIP1"/>
</dbReference>
<dbReference type="Reactome" id="R-HSA-937072">
    <property type="pathway name" value="TRAF6-mediated induction of TAK1 complex within TLR4 complex"/>
</dbReference>
<dbReference type="Reactome" id="R-HSA-9707616">
    <property type="pathway name" value="Heme signaling"/>
</dbReference>
<dbReference type="Reactome" id="R-HSA-975163">
    <property type="pathway name" value="IRAK2 mediated activation of TAK1 complex upon TLR7/8 or 9 stimulation"/>
</dbReference>
<dbReference type="Reactome" id="R-HSA-9820960">
    <property type="pathway name" value="Respiratory syncytial virus (RSV) attachment and entry"/>
</dbReference>
<dbReference type="Reactome" id="R-HSA-9824878">
    <property type="pathway name" value="Regulation of TBK1, IKKEpsilon (IKBKE)-mediated activation of IRF3, IRF7"/>
</dbReference>
<dbReference type="Reactome" id="R-HSA-9833110">
    <property type="pathway name" value="RSV-host interactions"/>
</dbReference>
<dbReference type="SignaLink" id="Q9Y6Y9"/>
<dbReference type="SIGNOR" id="Q9Y6Y9"/>
<dbReference type="BioGRID-ORCS" id="23643">
    <property type="hits" value="15 hits in 1080 CRISPR screens"/>
</dbReference>
<dbReference type="ChiTaRS" id="LY96">
    <property type="organism name" value="human"/>
</dbReference>
<dbReference type="EvolutionaryTrace" id="Q9Y6Y9"/>
<dbReference type="GeneWiki" id="Lymphocyte_antigen_96"/>
<dbReference type="GenomeRNAi" id="23643"/>
<dbReference type="Pharos" id="Q9Y6Y9">
    <property type="development level" value="Tchem"/>
</dbReference>
<dbReference type="PRO" id="PR:Q9Y6Y9"/>
<dbReference type="Proteomes" id="UP000005640">
    <property type="component" value="Chromosome 8"/>
</dbReference>
<dbReference type="RNAct" id="Q9Y6Y9">
    <property type="molecule type" value="protein"/>
</dbReference>
<dbReference type="Bgee" id="ENSG00000154589">
    <property type="expression patterns" value="Expressed in monocyte and 173 other cell types or tissues"/>
</dbReference>
<dbReference type="GO" id="GO:0010008">
    <property type="term" value="C:endosome membrane"/>
    <property type="evidence" value="ECO:0000304"/>
    <property type="project" value="Reactome"/>
</dbReference>
<dbReference type="GO" id="GO:0005576">
    <property type="term" value="C:extracellular region"/>
    <property type="evidence" value="ECO:0000304"/>
    <property type="project" value="Reactome"/>
</dbReference>
<dbReference type="GO" id="GO:0046696">
    <property type="term" value="C:lipopolysaccharide receptor complex"/>
    <property type="evidence" value="ECO:0000314"/>
    <property type="project" value="UniProtKB"/>
</dbReference>
<dbReference type="GO" id="GO:0005886">
    <property type="term" value="C:plasma membrane"/>
    <property type="evidence" value="ECO:0000314"/>
    <property type="project" value="UniProtKB"/>
</dbReference>
<dbReference type="GO" id="GO:0043235">
    <property type="term" value="C:receptor complex"/>
    <property type="evidence" value="ECO:0000353"/>
    <property type="project" value="ComplexPortal"/>
</dbReference>
<dbReference type="GO" id="GO:0015026">
    <property type="term" value="F:coreceptor activity"/>
    <property type="evidence" value="ECO:0000304"/>
    <property type="project" value="ProtInc"/>
</dbReference>
<dbReference type="GO" id="GO:0001530">
    <property type="term" value="F:lipopolysaccharide binding"/>
    <property type="evidence" value="ECO:0007669"/>
    <property type="project" value="InterPro"/>
</dbReference>
<dbReference type="GO" id="GO:0001875">
    <property type="term" value="F:lipopolysaccharide immune receptor activity"/>
    <property type="evidence" value="ECO:0000314"/>
    <property type="project" value="UniProtKB"/>
</dbReference>
<dbReference type="GO" id="GO:0035662">
    <property type="term" value="F:Toll-like receptor 4 binding"/>
    <property type="evidence" value="ECO:0007669"/>
    <property type="project" value="InterPro"/>
</dbReference>
<dbReference type="GO" id="GO:0007166">
    <property type="term" value="P:cell surface receptor signaling pathway"/>
    <property type="evidence" value="ECO:0000304"/>
    <property type="project" value="ProtInc"/>
</dbReference>
<dbReference type="GO" id="GO:0006968">
    <property type="term" value="P:cellular defense response"/>
    <property type="evidence" value="ECO:0000304"/>
    <property type="project" value="ProtInc"/>
</dbReference>
<dbReference type="GO" id="GO:0071222">
    <property type="term" value="P:cellular response to lipopolysaccharide"/>
    <property type="evidence" value="ECO:0000318"/>
    <property type="project" value="GO_Central"/>
</dbReference>
<dbReference type="GO" id="GO:0032497">
    <property type="term" value="P:detection of lipopolysaccharide"/>
    <property type="evidence" value="ECO:0000314"/>
    <property type="project" value="UniProtKB"/>
</dbReference>
<dbReference type="GO" id="GO:0006954">
    <property type="term" value="P:inflammatory response"/>
    <property type="evidence" value="ECO:0007669"/>
    <property type="project" value="UniProtKB-KW"/>
</dbReference>
<dbReference type="GO" id="GO:0045087">
    <property type="term" value="P:innate immune response"/>
    <property type="evidence" value="ECO:0000303"/>
    <property type="project" value="ComplexPortal"/>
</dbReference>
<dbReference type="GO" id="GO:0031666">
    <property type="term" value="P:positive regulation of lipopolysaccharide-mediated signaling pathway"/>
    <property type="evidence" value="ECO:0000318"/>
    <property type="project" value="GO_Central"/>
</dbReference>
<dbReference type="GO" id="GO:0032760">
    <property type="term" value="P:positive regulation of tumor necrosis factor production"/>
    <property type="evidence" value="ECO:0000250"/>
    <property type="project" value="UniProtKB"/>
</dbReference>
<dbReference type="GO" id="GO:0032496">
    <property type="term" value="P:response to lipopolysaccharide"/>
    <property type="evidence" value="ECO:0000314"/>
    <property type="project" value="MGI"/>
</dbReference>
<dbReference type="GO" id="GO:0034142">
    <property type="term" value="P:toll-like receptor 4 signaling pathway"/>
    <property type="evidence" value="ECO:0000250"/>
    <property type="project" value="UniProtKB"/>
</dbReference>
<dbReference type="GO" id="GO:0002224">
    <property type="term" value="P:toll-like receptor signaling pathway"/>
    <property type="evidence" value="ECO:0000314"/>
    <property type="project" value="ComplexPortal"/>
</dbReference>
<dbReference type="FunFam" id="2.60.40.770:FF:000003">
    <property type="entry name" value="Lymphocyte antigen 96"/>
    <property type="match status" value="1"/>
</dbReference>
<dbReference type="Gene3D" id="2.60.40.770">
    <property type="match status" value="1"/>
</dbReference>
<dbReference type="InterPro" id="IPR014756">
    <property type="entry name" value="Ig_E-set"/>
</dbReference>
<dbReference type="InterPro" id="IPR039217">
    <property type="entry name" value="LY96"/>
</dbReference>
<dbReference type="InterPro" id="IPR003172">
    <property type="entry name" value="ML_dom"/>
</dbReference>
<dbReference type="PANTHER" id="PTHR15218:SF0">
    <property type="entry name" value="LYMPHOCYTE ANTIGEN 96"/>
    <property type="match status" value="1"/>
</dbReference>
<dbReference type="PANTHER" id="PTHR15218">
    <property type="entry name" value="MD-1, MD-2 - RELATED"/>
    <property type="match status" value="1"/>
</dbReference>
<dbReference type="Pfam" id="PF02221">
    <property type="entry name" value="E1_DerP2_DerF2"/>
    <property type="match status" value="1"/>
</dbReference>
<dbReference type="SMART" id="SM00737">
    <property type="entry name" value="ML"/>
    <property type="match status" value="1"/>
</dbReference>
<dbReference type="SUPFAM" id="SSF81296">
    <property type="entry name" value="E set domains"/>
    <property type="match status" value="1"/>
</dbReference>
<protein>
    <recommendedName>
        <fullName>Lymphocyte antigen 96</fullName>
        <shortName>Ly-96</shortName>
    </recommendedName>
    <alternativeName>
        <fullName evidence="13">ESOP-1</fullName>
    </alternativeName>
    <alternativeName>
        <fullName evidence="12">Protein MD-2</fullName>
    </alternativeName>
</protein>
<feature type="signal peptide" evidence="1">
    <location>
        <begin position="1"/>
        <end position="18"/>
    </location>
</feature>
<feature type="chain" id="PRO_0000018619" description="Lymphocyte antigen 96">
    <location>
        <begin position="19"/>
        <end position="160"/>
    </location>
</feature>
<feature type="region of interest" description="Interaction with lipopolysaccharide" evidence="9 10 16 17 19">
    <location>
        <begin position="119"/>
        <end position="123"/>
    </location>
</feature>
<feature type="glycosylation site" description="N-linked (GlcNAc...) asparagine" evidence="9 16 17">
    <location>
        <position position="26"/>
    </location>
</feature>
<feature type="glycosylation site" description="N-linked (GlcNAc...) asparagine" evidence="9 16 17">
    <location>
        <position position="114"/>
    </location>
</feature>
<feature type="disulfide bond" evidence="9 10 16 17 18">
    <location>
        <begin position="25"/>
        <end position="51"/>
    </location>
</feature>
<feature type="disulfide bond" evidence="9 10 16 17 18">
    <location>
        <begin position="37"/>
        <end position="148"/>
    </location>
</feature>
<feature type="disulfide bond" evidence="9 10 16 17 18">
    <location>
        <begin position="95"/>
        <end position="105"/>
    </location>
</feature>
<feature type="splice variant" id="VSP_055045" description="In isoform 2." evidence="14">
    <original>DKMQYPISINVNPCIELKRSKGLLHIFYIPR</original>
    <variation>G</variation>
    <location>
        <begin position="38"/>
        <end position="68"/>
    </location>
</feature>
<feature type="sequence variant" id="VAR_050030" description="In dbSNP:rs6472812." evidence="2 3 6 8 11">
    <original>R</original>
    <variation>G</variation>
    <location>
        <position position="56"/>
    </location>
</feature>
<feature type="sequence variant" id="VAR_024532" description="In dbSNP:rs11466004.">
    <original>P</original>
    <variation>S</variation>
    <location>
        <position position="157"/>
    </location>
</feature>
<feature type="mutagenesis site" description="Abolishes LPS-response." evidence="6">
    <original>C</original>
    <variation>Y</variation>
    <location>
        <position position="95"/>
    </location>
</feature>
<feature type="strand" evidence="20">
    <location>
        <begin position="22"/>
        <end position="26"/>
    </location>
</feature>
<feature type="strand" evidence="20">
    <location>
        <begin position="28"/>
        <end position="36"/>
    </location>
</feature>
<feature type="strand" evidence="21">
    <location>
        <begin position="38"/>
        <end position="40"/>
    </location>
</feature>
<feature type="strand" evidence="20">
    <location>
        <begin position="45"/>
        <end position="50"/>
    </location>
</feature>
<feature type="strand" evidence="20">
    <location>
        <begin position="57"/>
        <end position="65"/>
    </location>
</feature>
<feature type="strand" evidence="20">
    <location>
        <begin position="75"/>
        <end position="82"/>
    </location>
</feature>
<feature type="strand" evidence="20">
    <location>
        <begin position="90"/>
        <end position="93"/>
    </location>
</feature>
<feature type="strand" evidence="20">
    <location>
        <begin position="97"/>
        <end position="101"/>
    </location>
</feature>
<feature type="helix" evidence="20">
    <location>
        <begin position="103"/>
        <end position="106"/>
    </location>
</feature>
<feature type="strand" evidence="20">
    <location>
        <begin position="113"/>
        <end position="121"/>
    </location>
</feature>
<feature type="strand" evidence="20">
    <location>
        <begin position="129"/>
        <end position="139"/>
    </location>
</feature>
<feature type="turn" evidence="20">
    <location>
        <begin position="140"/>
        <end position="143"/>
    </location>
</feature>
<feature type="strand" evidence="20">
    <location>
        <begin position="144"/>
        <end position="155"/>
    </location>
</feature>
<reference key="1">
    <citation type="journal article" date="1999" name="J. Exp. Med.">
        <title>MD-2, a molecule that confers lipopolysaccharide responsiveness on Toll-like receptor 4.</title>
        <authorList>
            <person name="Shimazu R."/>
            <person name="Akashi S."/>
            <person name="Ogata H."/>
            <person name="Nagai Y."/>
            <person name="Fukudome K."/>
            <person name="Miyake K."/>
            <person name="Kimoto M."/>
        </authorList>
    </citation>
    <scope>NUCLEOTIDE SEQUENCE [MRNA] (ISOFORM 1)</scope>
    <scope>VARIANT GLY-56</scope>
    <scope>FUNCTION</scope>
    <scope>INTERACTION WITH TLR4</scope>
    <scope>SUBCELLULAR LOCATION</scope>
    <source>
        <tissue>Uterus</tissue>
    </source>
</reference>
<reference key="2">
    <citation type="journal article" date="2000" name="Blood">
        <title>ESOP-1, a secreted protein expressed in the hematopoietic, nervous, and reproductive systems of embryonic and adult mice.</title>
        <authorList>
            <person name="Kato K."/>
            <person name="Morrison A.M."/>
            <person name="Nakano T."/>
            <person name="Tashiro K."/>
            <person name="Honjo T."/>
        </authorList>
    </citation>
    <scope>NUCLEOTIDE SEQUENCE [MRNA] (ISOFORM 1)</scope>
    <scope>VARIANT GLY-56</scope>
</reference>
<reference key="3">
    <citation type="journal article" date="2001" name="J. Exp. Med.">
        <title>Molecular genetic analysis of an endotoxin nonresponder mutant cell line. A point mutation in a conserved region of MD-2 abolishes endotoxin-induced signaling.</title>
        <authorList>
            <person name="Schromm A.B."/>
            <person name="Lien E."/>
            <person name="Henneke P."/>
            <person name="Chow J.C."/>
            <person name="Yoshimura A."/>
            <person name="Heine H."/>
            <person name="Latz E."/>
            <person name="Monks B.G."/>
            <person name="Schwartz D.A."/>
            <person name="Miyake K."/>
            <person name="Golenbock D.T."/>
        </authorList>
    </citation>
    <scope>NUCLEOTIDE SEQUENCE [MRNA] (ISOFORM 1)</scope>
    <scope>MUTAGENESIS OF CYS-95</scope>
    <scope>VARIANT GLY-56</scope>
</reference>
<reference key="4">
    <citation type="journal article" date="2008" name="Immunogenetics">
        <title>Natural selection in the TLR-related genes in the course of primate evolution.</title>
        <authorList>
            <person name="Nakajima T."/>
            <person name="Ohtani H."/>
            <person name="Satta Y."/>
            <person name="Uno Y."/>
            <person name="Akari H."/>
            <person name="Ishida T."/>
            <person name="Kimura A."/>
        </authorList>
    </citation>
    <scope>NUCLEOTIDE SEQUENCE [MRNA] (ISOFORM 1)</scope>
    <scope>VARIANT GLY-56</scope>
</reference>
<reference key="5">
    <citation type="journal article" date="2006" name="Nature">
        <title>DNA sequence and analysis of human chromosome 8.</title>
        <authorList>
            <person name="Nusbaum C."/>
            <person name="Mikkelsen T.S."/>
            <person name="Zody M.C."/>
            <person name="Asakawa S."/>
            <person name="Taudien S."/>
            <person name="Garber M."/>
            <person name="Kodira C.D."/>
            <person name="Schueler M.G."/>
            <person name="Shimizu A."/>
            <person name="Whittaker C.A."/>
            <person name="Chang J.L."/>
            <person name="Cuomo C.A."/>
            <person name="Dewar K."/>
            <person name="FitzGerald M.G."/>
            <person name="Yang X."/>
            <person name="Allen N.R."/>
            <person name="Anderson S."/>
            <person name="Asakawa T."/>
            <person name="Blechschmidt K."/>
            <person name="Bloom T."/>
            <person name="Borowsky M.L."/>
            <person name="Butler J."/>
            <person name="Cook A."/>
            <person name="Corum B."/>
            <person name="DeArellano K."/>
            <person name="DeCaprio D."/>
            <person name="Dooley K.T."/>
            <person name="Dorris L. III"/>
            <person name="Engels R."/>
            <person name="Gloeckner G."/>
            <person name="Hafez N."/>
            <person name="Hagopian D.S."/>
            <person name="Hall J.L."/>
            <person name="Ishikawa S.K."/>
            <person name="Jaffe D.B."/>
            <person name="Kamat A."/>
            <person name="Kudoh J."/>
            <person name="Lehmann R."/>
            <person name="Lokitsang T."/>
            <person name="Macdonald P."/>
            <person name="Major J.E."/>
            <person name="Matthews C.D."/>
            <person name="Mauceli E."/>
            <person name="Menzel U."/>
            <person name="Mihalev A.H."/>
            <person name="Minoshima S."/>
            <person name="Murayama Y."/>
            <person name="Naylor J.W."/>
            <person name="Nicol R."/>
            <person name="Nguyen C."/>
            <person name="O'Leary S.B."/>
            <person name="O'Neill K."/>
            <person name="Parker S.C.J."/>
            <person name="Polley A."/>
            <person name="Raymond C.K."/>
            <person name="Reichwald K."/>
            <person name="Rodriguez J."/>
            <person name="Sasaki T."/>
            <person name="Schilhabel M."/>
            <person name="Siddiqui R."/>
            <person name="Smith C.L."/>
            <person name="Sneddon T.P."/>
            <person name="Talamas J.A."/>
            <person name="Tenzin P."/>
            <person name="Topham K."/>
            <person name="Venkataraman V."/>
            <person name="Wen G."/>
            <person name="Yamazaki S."/>
            <person name="Young S.K."/>
            <person name="Zeng Q."/>
            <person name="Zimmer A.R."/>
            <person name="Rosenthal A."/>
            <person name="Birren B.W."/>
            <person name="Platzer M."/>
            <person name="Shimizu N."/>
            <person name="Lander E.S."/>
        </authorList>
    </citation>
    <scope>NUCLEOTIDE SEQUENCE [LARGE SCALE GENOMIC DNA]</scope>
</reference>
<reference key="6">
    <citation type="journal article" date="2004" name="Genome Res.">
        <title>The status, quality, and expansion of the NIH full-length cDNA project: the Mammalian Gene Collection (MGC).</title>
        <authorList>
            <consortium name="The MGC Project Team"/>
        </authorList>
    </citation>
    <scope>NUCLEOTIDE SEQUENCE [LARGE SCALE MRNA] (ISOFORM 1)</scope>
    <scope>VARIANT GLY-56</scope>
    <source>
        <tissue>Liver</tissue>
    </source>
</reference>
<reference key="7">
    <citation type="journal article" date="2001" name="J. Biol. Chem.">
        <title>Lipopolysaccharide is in close proximity to each of the proteins in its membrane receptor complex. transfer from CD14 to TLR4 and MD-2.</title>
        <authorList>
            <person name="da Silva Correia J."/>
            <person name="Soldau K."/>
            <person name="Christen U."/>
            <person name="Tobias P.S."/>
            <person name="Ulevitch R.J."/>
        </authorList>
    </citation>
    <scope>SUBUNIT</scope>
    <scope>SUBCELLULAR LOCATION</scope>
</reference>
<reference key="8">
    <citation type="journal article" date="2001" name="J. Immunol.">
        <title>MD-2 enables Toll-like receptor 2 (TLR2)-mediated responses to lipopolysaccharide and enhances TLR2-mediated responses to Gram-positive and Gram-negative bacteria and their cell wall components.</title>
        <authorList>
            <person name="Dziarski R."/>
            <person name="Wang Q."/>
            <person name="Miyake K."/>
            <person name="Kirschning C.J."/>
            <person name="Gupta D."/>
        </authorList>
    </citation>
    <scope>INTERACTION WITH TLR2 AND TLR4</scope>
    <scope>FUNCTION</scope>
</reference>
<reference key="9">
    <citation type="journal article" date="2001" name="Proc. Natl. Acad. Sci. U.S.A.">
        <title>Secreted MD-2 is a large polymeric protein that efficiently confers lipopolysaccharide sensitivity to Toll-like receptor 4.</title>
        <authorList>
            <person name="Visintin A."/>
            <person name="Mazzoni A."/>
            <person name="Spitzer J.A."/>
            <person name="Segal D.M."/>
        </authorList>
    </citation>
    <scope>DISULFIDE BONDS</scope>
    <scope>GLYCOSYLATION</scope>
    <scope>SUBCELLULAR LOCATION</scope>
    <scope>FUNCTION</scope>
    <scope>INTERACTION WITH TLR4</scope>
</reference>
<reference key="10">
    <citation type="journal article" date="2003" name="Proc. Natl. Acad. Sci. U.S.A.">
        <title>The role of disulfide bonds in the assembly and function of MD-2.</title>
        <authorList>
            <person name="Mullen G.E.D."/>
            <person name="Kennedy M.N."/>
            <person name="Visintin A."/>
            <person name="Mazzoni A."/>
            <person name="Leifer C.A."/>
            <person name="Davies D.R."/>
            <person name="Segal D.M."/>
        </authorList>
    </citation>
    <scope>INTERCHAIN DISULFIDE BOND</scope>
</reference>
<reference key="11">
    <citation type="journal article" date="2007" name="Cell">
        <title>Crystal structure of the TLR4-MD-2 complex with bound endotoxin antagonist Eritoran.</title>
        <authorList>
            <person name="Kim H.M."/>
            <person name="Park B.S."/>
            <person name="Kim J.-I."/>
            <person name="Kim S.E."/>
            <person name="Lee J."/>
            <person name="Oh S.C."/>
            <person name="Enkhbayar P."/>
            <person name="Matsushima N."/>
            <person name="Lee H."/>
            <person name="Yoo O.J."/>
            <person name="Lee J.-O."/>
        </authorList>
    </citation>
    <scope>X-RAY CRYSTALLOGRAPHY (1.7 ANGSTROMS) OF 19-158 IN COMPLEX WITH TLR4 AND LIPOPOLYSACCHARIDE ANALOG</scope>
    <scope>SUBUNIT</scope>
</reference>
<reference key="12">
    <citation type="journal article" date="2007" name="Science">
        <title>Crystal structures of human MD-2 and its complex with antiendotoxic lipid IVa.</title>
        <authorList>
            <person name="Ohto U."/>
            <person name="Fukase K."/>
            <person name="Miyake K."/>
            <person name="Satow Y."/>
        </authorList>
    </citation>
    <scope>X-RAY CRYSTALLOGRAPHY (2.0 ANGSTROMS) OF 17-160 IN COMPLEX WITH LIPID IV-A</scope>
    <scope>DISULFIDE BONDS</scope>
    <scope>GLYCOSYLATION AT ASN-26 AND ASN-114</scope>
</reference>
<comment type="function">
    <text evidence="2 4 7 9 10">Binds bacterial lipopolysaccharide (LPS) (PubMed:17569869, PubMed:17803912). Cooperates with TLR4 in the innate immune response to bacterial lipopolysaccharide (LPS), and with TLR2 in the response to cell wall components from Gram-positive and Gram-negative bacteria (PubMed:11160242, PubMed:11593030). Enhances TLR4-dependent activation of NF-kappa-B (PubMed:10359581). Cells expressing both LY96 and TLR4, but not TLR4 alone, respond to LPS (PubMed:10359581).</text>
</comment>
<comment type="subunit">
    <text evidence="2 5 7 9 10">Heterogeneous homomer formed from homodimers; disulfide-linked (PubMed:11593030, PubMed:12642668). Belongs to the lipopolysaccharide (LPS) receptor, a multi-protein complex containing at least CD14, LY96 and TLR4 (PubMed:11274165). Binds to the extracellular domains of TLR2 and TLR4 (PubMed:10359581, PubMed:11593030, PubMed:17803912). Ligand binding induces interaction with TLR4 and oligomerization of the complex.</text>
</comment>
<comment type="interaction">
    <interactant intactId="EBI-1539247">
        <id>Q9Y6Y9</id>
    </interactant>
    <interactant intactId="EBI-11911016">
        <id>P80188</id>
        <label>LCN2</label>
    </interactant>
    <organismsDiffer>false</organismsDiffer>
    <experiments>3</experiments>
</comment>
<comment type="interaction">
    <interactant intactId="EBI-1539247">
        <id>Q9Y6Y9</id>
    </interactant>
    <interactant intactId="EBI-6165891">
        <id>Q14696</id>
        <label>MESD</label>
    </interactant>
    <organismsDiffer>false</organismsDiffer>
    <experiments>3</experiments>
</comment>
<comment type="interaction">
    <interactant intactId="EBI-1539247">
        <id>Q9Y6Y9</id>
    </interactant>
    <interactant intactId="EBI-528701">
        <id>O00206</id>
        <label>TLR4</label>
    </interactant>
    <organismsDiffer>false</organismsDiffer>
    <experiments>7</experiments>
</comment>
<comment type="interaction">
    <interactant intactId="EBI-1539247">
        <id>Q9Y6Y9</id>
    </interactant>
    <interactant intactId="EBI-15745059">
        <id>O00206-1</id>
        <label>TLR4</label>
    </interactant>
    <organismsDiffer>false</organismsDiffer>
    <experiments>5</experiments>
</comment>
<comment type="interaction">
    <interactant intactId="EBI-1539247">
        <id>Q9Y6Y9</id>
    </interactant>
    <interactant intactId="EBI-15745025">
        <id>P49278</id>
        <label>DERP2</label>
    </interactant>
    <organismsDiffer>true</organismsDiffer>
    <experiments>2</experiments>
</comment>
<comment type="subcellular location">
    <subcellularLocation>
        <location evidence="2 7 15">Secreted</location>
        <location evidence="2 7 15">Extracellular space</location>
    </subcellularLocation>
    <subcellularLocation>
        <location evidence="7">Secreted</location>
    </subcellularLocation>
    <text evidence="2 7">Retained in the extracellular space at the cell surface by interaction with TLR4 (PubMed:10359581).</text>
</comment>
<comment type="alternative products">
    <event type="alternative splicing"/>
    <isoform>
        <id>Q9Y6Y9-1</id>
        <name>1</name>
        <sequence type="displayed"/>
    </isoform>
    <isoform>
        <id>Q9Y6Y9-2</id>
        <name>2</name>
        <sequence type="described" ref="VSP_055045"/>
    </isoform>
</comment>
<comment type="PTM">
    <text evidence="7 9">N-glycosylated; high-mannose.</text>
</comment>
<gene>
    <name type="primary">LY96</name>
    <name type="synonym">ESOP1</name>
    <name type="synonym">MD2</name>
</gene>
<accession>Q9Y6Y9</accession>
<accession>B3Y6A5</accession>
<accession>E5RJJ7</accession>
<proteinExistence type="evidence at protein level"/>
<keyword id="KW-0002">3D-structure</keyword>
<keyword id="KW-0025">Alternative splicing</keyword>
<keyword id="KW-1015">Disulfide bond</keyword>
<keyword id="KW-0325">Glycoprotein</keyword>
<keyword id="KW-0391">Immunity</keyword>
<keyword id="KW-0395">Inflammatory response</keyword>
<keyword id="KW-0399">Innate immunity</keyword>
<keyword id="KW-1267">Proteomics identification</keyword>
<keyword id="KW-1185">Reference proteome</keyword>
<keyword id="KW-0964">Secreted</keyword>
<keyword id="KW-0732">Signal</keyword>
<organism>
    <name type="scientific">Homo sapiens</name>
    <name type="common">Human</name>
    <dbReference type="NCBI Taxonomy" id="9606"/>
    <lineage>
        <taxon>Eukaryota</taxon>
        <taxon>Metazoa</taxon>
        <taxon>Chordata</taxon>
        <taxon>Craniata</taxon>
        <taxon>Vertebrata</taxon>
        <taxon>Euteleostomi</taxon>
        <taxon>Mammalia</taxon>
        <taxon>Eutheria</taxon>
        <taxon>Euarchontoglires</taxon>
        <taxon>Primates</taxon>
        <taxon>Haplorrhini</taxon>
        <taxon>Catarrhini</taxon>
        <taxon>Hominidae</taxon>
        <taxon>Homo</taxon>
    </lineage>
</organism>
<evidence type="ECO:0000255" key="1"/>
<evidence type="ECO:0000269" key="2">
    <source>
    </source>
</evidence>
<evidence type="ECO:0000269" key="3">
    <source>
    </source>
</evidence>
<evidence type="ECO:0000269" key="4">
    <source>
    </source>
</evidence>
<evidence type="ECO:0000269" key="5">
    <source>
    </source>
</evidence>
<evidence type="ECO:0000269" key="6">
    <source>
    </source>
</evidence>
<evidence type="ECO:0000269" key="7">
    <source>
    </source>
</evidence>
<evidence type="ECO:0000269" key="8">
    <source>
    </source>
</evidence>
<evidence type="ECO:0000269" key="9">
    <source>
    </source>
</evidence>
<evidence type="ECO:0000269" key="10">
    <source>
    </source>
</evidence>
<evidence type="ECO:0000269" key="11">
    <source>
    </source>
</evidence>
<evidence type="ECO:0000303" key="12">
    <source>
    </source>
</evidence>
<evidence type="ECO:0000303" key="13">
    <source>
    </source>
</evidence>
<evidence type="ECO:0000305" key="14"/>
<evidence type="ECO:0000305" key="15">
    <source>
    </source>
</evidence>
<evidence type="ECO:0007744" key="16">
    <source>
        <dbReference type="PDB" id="2E56"/>
    </source>
</evidence>
<evidence type="ECO:0007744" key="17">
    <source>
        <dbReference type="PDB" id="2E59"/>
    </source>
</evidence>
<evidence type="ECO:0007744" key="18">
    <source>
        <dbReference type="PDB" id="2Z65"/>
    </source>
</evidence>
<evidence type="ECO:0007744" key="19">
    <source>
        <dbReference type="PDB" id="4G8A"/>
    </source>
</evidence>
<evidence type="ECO:0007829" key="20">
    <source>
        <dbReference type="PDB" id="2E56"/>
    </source>
</evidence>
<evidence type="ECO:0007829" key="21">
    <source>
        <dbReference type="PDB" id="4G8A"/>
    </source>
</evidence>
<sequence length="160" mass="18546">MLPFLFFSTLFSSIFTEAQKQYWVCNSSDASISYTYCDKMQYPISINVNPCIELKRSKGLLHIFYIPRRDLKQLYFNLYITVNTMNLPKRKEVICRGSDDDYSFCRALKGETVNTTISFSFKGIKFSKGKYKCVVEAISGSPEEMLFCLEFVILHQPNSN</sequence>